<feature type="chain" id="PRO_0000343541" description="Small ribosomal subunit protein mS23">
    <location>
        <begin position="1"/>
        <end position="258"/>
    </location>
</feature>
<name>RT25_ASPFC</name>
<accession>B0Y5R7</accession>
<evidence type="ECO:0000250" key="1"/>
<evidence type="ECO:0000305" key="2"/>
<keyword id="KW-0496">Mitochondrion</keyword>
<keyword id="KW-0687">Ribonucleoprotein</keyword>
<keyword id="KW-0689">Ribosomal protein</keyword>
<reference key="1">
    <citation type="journal article" date="2008" name="PLoS Genet.">
        <title>Genomic islands in the pathogenic filamentous fungus Aspergillus fumigatus.</title>
        <authorList>
            <person name="Fedorova N.D."/>
            <person name="Khaldi N."/>
            <person name="Joardar V.S."/>
            <person name="Maiti R."/>
            <person name="Amedeo P."/>
            <person name="Anderson M.J."/>
            <person name="Crabtree J."/>
            <person name="Silva J.C."/>
            <person name="Badger J.H."/>
            <person name="Albarraq A."/>
            <person name="Angiuoli S."/>
            <person name="Bussey H."/>
            <person name="Bowyer P."/>
            <person name="Cotty P.J."/>
            <person name="Dyer P.S."/>
            <person name="Egan A."/>
            <person name="Galens K."/>
            <person name="Fraser-Liggett C.M."/>
            <person name="Haas B.J."/>
            <person name="Inman J.M."/>
            <person name="Kent R."/>
            <person name="Lemieux S."/>
            <person name="Malavazi I."/>
            <person name="Orvis J."/>
            <person name="Roemer T."/>
            <person name="Ronning C.M."/>
            <person name="Sundaram J.P."/>
            <person name="Sutton G."/>
            <person name="Turner G."/>
            <person name="Venter J.C."/>
            <person name="White O.R."/>
            <person name="Whitty B.R."/>
            <person name="Youngman P."/>
            <person name="Wolfe K.H."/>
            <person name="Goldman G.H."/>
            <person name="Wortman J.R."/>
            <person name="Jiang B."/>
            <person name="Denning D.W."/>
            <person name="Nierman W.C."/>
        </authorList>
    </citation>
    <scope>NUCLEOTIDE SEQUENCE [LARGE SCALE GENOMIC DNA]</scope>
    <source>
        <strain>CBS 144.89 / FGSC A1163 / CEA10</strain>
    </source>
</reference>
<protein>
    <recommendedName>
        <fullName evidence="2">Small ribosomal subunit protein mS23</fullName>
    </recommendedName>
    <alternativeName>
        <fullName>37S ribosomal protein S25, mitochondrial</fullName>
    </alternativeName>
</protein>
<sequence length="258" mass="29752">MGKYNFTALRVRQTALRQHAAGKIRAPPKWLDVVADIPPAQVLVRNQAPQHQLVRQRVKTLPGTSKPQVVFEVQEKRIKPKKASRMFLPTEIKYEEDQLRQEFFRDHPWELARPRVLVESTGKDSEHYDWSRLQQPGKRLDGESVVQRQLWLLNNVPDMTKSAAYDIARREFYRLRLQEDIERRVAAEEAEATGATFGPSLLEVGMELENQEYERWKAWAKMEAQLLDQKTAAFTGAPEIAAADDAVEELEEKVPVPV</sequence>
<organism>
    <name type="scientific">Aspergillus fumigatus (strain CBS 144.89 / FGSC A1163 / CEA10)</name>
    <name type="common">Neosartorya fumigata</name>
    <dbReference type="NCBI Taxonomy" id="451804"/>
    <lineage>
        <taxon>Eukaryota</taxon>
        <taxon>Fungi</taxon>
        <taxon>Dikarya</taxon>
        <taxon>Ascomycota</taxon>
        <taxon>Pezizomycotina</taxon>
        <taxon>Eurotiomycetes</taxon>
        <taxon>Eurotiomycetidae</taxon>
        <taxon>Eurotiales</taxon>
        <taxon>Aspergillaceae</taxon>
        <taxon>Aspergillus</taxon>
        <taxon>Aspergillus subgen. Fumigati</taxon>
    </lineage>
</organism>
<comment type="subunit">
    <text evidence="1">Component of the mitochondrial small ribosomal subunit.</text>
</comment>
<comment type="subcellular location">
    <subcellularLocation>
        <location evidence="1">Mitochondrion</location>
    </subcellularLocation>
</comment>
<comment type="similarity">
    <text evidence="2">Belongs to the mitochondrion-specific ribosomal protein mS23 family.</text>
</comment>
<gene>
    <name type="ORF">AFUB_064340</name>
</gene>
<dbReference type="EMBL" id="DS499598">
    <property type="protein sequence ID" value="EDP50102.1"/>
    <property type="molecule type" value="Genomic_DNA"/>
</dbReference>
<dbReference type="SMR" id="B0Y5R7"/>
<dbReference type="EnsemblFungi" id="EDP50102">
    <property type="protein sequence ID" value="EDP50102"/>
    <property type="gene ID" value="AFUB_064340"/>
</dbReference>
<dbReference type="VEuPathDB" id="FungiDB:AFUB_064340"/>
<dbReference type="HOGENOM" id="CLU_081350_0_0_1"/>
<dbReference type="OrthoDB" id="75864at5052"/>
<dbReference type="PhylomeDB" id="B0Y5R7"/>
<dbReference type="Proteomes" id="UP000001699">
    <property type="component" value="Unassembled WGS sequence"/>
</dbReference>
<dbReference type="GO" id="GO:0005763">
    <property type="term" value="C:mitochondrial small ribosomal subunit"/>
    <property type="evidence" value="ECO:0007669"/>
    <property type="project" value="InterPro"/>
</dbReference>
<dbReference type="GO" id="GO:0003735">
    <property type="term" value="F:structural constituent of ribosome"/>
    <property type="evidence" value="ECO:0007669"/>
    <property type="project" value="InterPro"/>
</dbReference>
<dbReference type="InterPro" id="IPR016939">
    <property type="entry name" value="Ribosomal_mS23_fun"/>
</dbReference>
<dbReference type="PANTHER" id="PTHR37799">
    <property type="entry name" value="37S RIBOSOMAL PROTEIN S25, MITOCHONDRIAL"/>
    <property type="match status" value="1"/>
</dbReference>
<dbReference type="PANTHER" id="PTHR37799:SF1">
    <property type="entry name" value="SMALL RIBOSOMAL SUBUNIT PROTEIN MS23"/>
    <property type="match status" value="1"/>
</dbReference>
<dbReference type="Pfam" id="PF13741">
    <property type="entry name" value="MRP-S25"/>
    <property type="match status" value="1"/>
</dbReference>
<dbReference type="PIRSF" id="PIRSF029764">
    <property type="entry name" value="RSM25"/>
    <property type="match status" value="1"/>
</dbReference>
<proteinExistence type="inferred from homology"/>